<protein>
    <recommendedName>
        <fullName evidence="1">Large ribosomal subunit protein bL20</fullName>
    </recommendedName>
    <alternativeName>
        <fullName evidence="2">50S ribosomal protein L20</fullName>
    </alternativeName>
</protein>
<dbReference type="EMBL" id="CP000544">
    <property type="protein sequence ID" value="ABM61218.1"/>
    <property type="molecule type" value="Genomic_DNA"/>
</dbReference>
<dbReference type="RefSeq" id="WP_011813241.1">
    <property type="nucleotide sequence ID" value="NC_008789.1"/>
</dbReference>
<dbReference type="SMR" id="A1WU56"/>
<dbReference type="STRING" id="349124.Hhal_0430"/>
<dbReference type="KEGG" id="hha:Hhal_0430"/>
<dbReference type="eggNOG" id="COG0292">
    <property type="taxonomic scope" value="Bacteria"/>
</dbReference>
<dbReference type="HOGENOM" id="CLU_123265_0_1_6"/>
<dbReference type="OrthoDB" id="9808966at2"/>
<dbReference type="Proteomes" id="UP000000647">
    <property type="component" value="Chromosome"/>
</dbReference>
<dbReference type="GO" id="GO:1990904">
    <property type="term" value="C:ribonucleoprotein complex"/>
    <property type="evidence" value="ECO:0007669"/>
    <property type="project" value="UniProtKB-KW"/>
</dbReference>
<dbReference type="GO" id="GO:0005840">
    <property type="term" value="C:ribosome"/>
    <property type="evidence" value="ECO:0007669"/>
    <property type="project" value="UniProtKB-KW"/>
</dbReference>
<dbReference type="GO" id="GO:0019843">
    <property type="term" value="F:rRNA binding"/>
    <property type="evidence" value="ECO:0007669"/>
    <property type="project" value="UniProtKB-UniRule"/>
</dbReference>
<dbReference type="GO" id="GO:0003735">
    <property type="term" value="F:structural constituent of ribosome"/>
    <property type="evidence" value="ECO:0007669"/>
    <property type="project" value="InterPro"/>
</dbReference>
<dbReference type="GO" id="GO:0000027">
    <property type="term" value="P:ribosomal large subunit assembly"/>
    <property type="evidence" value="ECO:0007669"/>
    <property type="project" value="UniProtKB-UniRule"/>
</dbReference>
<dbReference type="GO" id="GO:0006412">
    <property type="term" value="P:translation"/>
    <property type="evidence" value="ECO:0007669"/>
    <property type="project" value="InterPro"/>
</dbReference>
<dbReference type="CDD" id="cd07026">
    <property type="entry name" value="Ribosomal_L20"/>
    <property type="match status" value="1"/>
</dbReference>
<dbReference type="FunFam" id="1.10.1900.20:FF:000001">
    <property type="entry name" value="50S ribosomal protein L20"/>
    <property type="match status" value="1"/>
</dbReference>
<dbReference type="Gene3D" id="6.10.160.10">
    <property type="match status" value="1"/>
</dbReference>
<dbReference type="Gene3D" id="1.10.1900.20">
    <property type="entry name" value="Ribosomal protein L20"/>
    <property type="match status" value="1"/>
</dbReference>
<dbReference type="HAMAP" id="MF_00382">
    <property type="entry name" value="Ribosomal_bL20"/>
    <property type="match status" value="1"/>
</dbReference>
<dbReference type="InterPro" id="IPR005813">
    <property type="entry name" value="Ribosomal_bL20"/>
</dbReference>
<dbReference type="InterPro" id="IPR049946">
    <property type="entry name" value="RIBOSOMAL_L20_CS"/>
</dbReference>
<dbReference type="InterPro" id="IPR035566">
    <property type="entry name" value="Ribosomal_protein_bL20_C"/>
</dbReference>
<dbReference type="NCBIfam" id="TIGR01032">
    <property type="entry name" value="rplT_bact"/>
    <property type="match status" value="1"/>
</dbReference>
<dbReference type="PANTHER" id="PTHR10986">
    <property type="entry name" value="39S RIBOSOMAL PROTEIN L20"/>
    <property type="match status" value="1"/>
</dbReference>
<dbReference type="Pfam" id="PF00453">
    <property type="entry name" value="Ribosomal_L20"/>
    <property type="match status" value="1"/>
</dbReference>
<dbReference type="PRINTS" id="PR00062">
    <property type="entry name" value="RIBOSOMALL20"/>
</dbReference>
<dbReference type="SUPFAM" id="SSF74731">
    <property type="entry name" value="Ribosomal protein L20"/>
    <property type="match status" value="1"/>
</dbReference>
<dbReference type="PROSITE" id="PS00937">
    <property type="entry name" value="RIBOSOMAL_L20"/>
    <property type="match status" value="1"/>
</dbReference>
<name>RL20_HALHL</name>
<feature type="chain" id="PRO_1000048990" description="Large ribosomal subunit protein bL20">
    <location>
        <begin position="1"/>
        <end position="119"/>
    </location>
</feature>
<organism>
    <name type="scientific">Halorhodospira halophila (strain DSM 244 / SL1)</name>
    <name type="common">Ectothiorhodospira halophila (strain DSM 244 / SL1)</name>
    <dbReference type="NCBI Taxonomy" id="349124"/>
    <lineage>
        <taxon>Bacteria</taxon>
        <taxon>Pseudomonadati</taxon>
        <taxon>Pseudomonadota</taxon>
        <taxon>Gammaproteobacteria</taxon>
        <taxon>Chromatiales</taxon>
        <taxon>Ectothiorhodospiraceae</taxon>
        <taxon>Halorhodospira</taxon>
    </lineage>
</organism>
<proteinExistence type="inferred from homology"/>
<keyword id="KW-1185">Reference proteome</keyword>
<keyword id="KW-0687">Ribonucleoprotein</keyword>
<keyword id="KW-0689">Ribosomal protein</keyword>
<keyword id="KW-0694">RNA-binding</keyword>
<keyword id="KW-0699">rRNA-binding</keyword>
<evidence type="ECO:0000255" key="1">
    <source>
        <dbReference type="HAMAP-Rule" id="MF_00382"/>
    </source>
</evidence>
<evidence type="ECO:0000305" key="2"/>
<accession>A1WU56</accession>
<gene>
    <name evidence="1" type="primary">rplT</name>
    <name type="ordered locus">Hhal_0430</name>
</gene>
<comment type="function">
    <text evidence="1">Binds directly to 23S ribosomal RNA and is necessary for the in vitro assembly process of the 50S ribosomal subunit. It is not involved in the protein synthesizing functions of that subunit.</text>
</comment>
<comment type="similarity">
    <text evidence="1">Belongs to the bacterial ribosomal protein bL20 family.</text>
</comment>
<reference key="1">
    <citation type="submission" date="2006-12" db="EMBL/GenBank/DDBJ databases">
        <title>Complete sequence of Halorhodospira halophila SL1.</title>
        <authorList>
            <consortium name="US DOE Joint Genome Institute"/>
            <person name="Copeland A."/>
            <person name="Lucas S."/>
            <person name="Lapidus A."/>
            <person name="Barry K."/>
            <person name="Detter J.C."/>
            <person name="Glavina del Rio T."/>
            <person name="Hammon N."/>
            <person name="Israni S."/>
            <person name="Dalin E."/>
            <person name="Tice H."/>
            <person name="Pitluck S."/>
            <person name="Saunders E."/>
            <person name="Brettin T."/>
            <person name="Bruce D."/>
            <person name="Han C."/>
            <person name="Tapia R."/>
            <person name="Schmutz J."/>
            <person name="Larimer F."/>
            <person name="Land M."/>
            <person name="Hauser L."/>
            <person name="Kyrpides N."/>
            <person name="Mikhailova N."/>
            <person name="Hoff W."/>
            <person name="Richardson P."/>
        </authorList>
    </citation>
    <scope>NUCLEOTIDE SEQUENCE [LARGE SCALE GENOMIC DNA]</scope>
    <source>
        <strain>DSM 244 / SL1</strain>
    </source>
</reference>
<sequence length="119" mass="13521">MSRVKRGVTNRAKHKKVLKAAKGYYGMRGSAFRIARQQVIKSGQYAYAHRRLRKREFRSLWIQRINAAARQHGLSYSRLMNGLQQAGIEVDRKQLADLAVHEPQSFAALAERAQGALSN</sequence>